<proteinExistence type="evidence at transcript level"/>
<reference key="1">
    <citation type="journal article" date="2004" name="Invest. Ophthalmol. Vis. Sci.">
        <title>Gene expression profiling of purified rat retinal ganglion cells.</title>
        <authorList>
            <person name="Farkas R.H."/>
            <person name="Qian J."/>
            <person name="Goldberg J.L."/>
            <person name="Quigley H.A."/>
            <person name="Zack D.J."/>
        </authorList>
    </citation>
    <scope>NUCLEOTIDE SEQUENCE [MRNA]</scope>
    <scope>TISSUE SPECIFICITY</scope>
</reference>
<reference key="2">
    <citation type="submission" date="2001-06" db="EMBL/GenBank/DDBJ databases">
        <title>Conservation of the fourth member of the histidine triad protein family (Hint-4) in rat and mouse.</title>
        <authorList>
            <person name="Huang C.-H."/>
            <person name="Chen H."/>
            <person name="Peng J."/>
            <person name="Chen Y."/>
        </authorList>
    </citation>
    <scope>NUCLEOTIDE SEQUENCE [MRNA] OF 10-175</scope>
    <source>
        <strain>Sprague-Dawley</strain>
    </source>
</reference>
<keyword id="KW-0007">Acetylation</keyword>
<keyword id="KW-0963">Cytoplasm</keyword>
<keyword id="KW-0378">Hydrolase</keyword>
<keyword id="KW-0547">Nucleotide-binding</keyword>
<keyword id="KW-0539">Nucleus</keyword>
<keyword id="KW-1185">Reference proteome</keyword>
<dbReference type="EC" id="3.9.1.-" evidence="3"/>
<dbReference type="EMBL" id="CF977728">
    <property type="status" value="NOT_ANNOTATED_CDS"/>
    <property type="molecule type" value="mRNA"/>
</dbReference>
<dbReference type="EMBL" id="AY040767">
    <property type="protein sequence ID" value="AAK94777.1"/>
    <property type="molecule type" value="mRNA"/>
</dbReference>
<dbReference type="SMR" id="Q8K3P7"/>
<dbReference type="FunCoup" id="Q8K3P7">
    <property type="interactions" value="1647"/>
</dbReference>
<dbReference type="STRING" id="10116.ENSRNOP00000019047"/>
<dbReference type="PhosphoSitePlus" id="Q8K3P7"/>
<dbReference type="SwissPalm" id="Q8K3P7"/>
<dbReference type="PaxDb" id="10116-ENSRNOP00000019047"/>
<dbReference type="UCSC" id="RGD:621603">
    <property type="organism name" value="rat"/>
</dbReference>
<dbReference type="AGR" id="RGD:621603"/>
<dbReference type="RGD" id="621603">
    <property type="gene designation" value="Hint3"/>
</dbReference>
<dbReference type="eggNOG" id="KOG4359">
    <property type="taxonomic scope" value="Eukaryota"/>
</dbReference>
<dbReference type="InParanoid" id="Q8K3P7"/>
<dbReference type="PhylomeDB" id="Q8K3P7"/>
<dbReference type="PRO" id="PR:Q8K3P7"/>
<dbReference type="Proteomes" id="UP000002494">
    <property type="component" value="Unplaced"/>
</dbReference>
<dbReference type="GO" id="GO:0005737">
    <property type="term" value="C:cytoplasm"/>
    <property type="evidence" value="ECO:0000250"/>
    <property type="project" value="UniProtKB"/>
</dbReference>
<dbReference type="GO" id="GO:0005634">
    <property type="term" value="C:nucleus"/>
    <property type="evidence" value="ECO:0000250"/>
    <property type="project" value="UniProtKB"/>
</dbReference>
<dbReference type="GO" id="GO:0043530">
    <property type="term" value="F:adenosine 5'-monophosphoramidase activity"/>
    <property type="evidence" value="ECO:0000250"/>
    <property type="project" value="UniProtKB"/>
</dbReference>
<dbReference type="GO" id="GO:0042802">
    <property type="term" value="F:identical protein binding"/>
    <property type="evidence" value="ECO:0000266"/>
    <property type="project" value="RGD"/>
</dbReference>
<dbReference type="GO" id="GO:0000166">
    <property type="term" value="F:nucleotide binding"/>
    <property type="evidence" value="ECO:0007669"/>
    <property type="project" value="UniProtKB-KW"/>
</dbReference>
<dbReference type="CDD" id="cd01278">
    <property type="entry name" value="aprataxin_related"/>
    <property type="match status" value="1"/>
</dbReference>
<dbReference type="FunFam" id="3.30.428.10:FF:000020">
    <property type="entry name" value="Histidine triad nucleotide-binding protein 3"/>
    <property type="match status" value="1"/>
</dbReference>
<dbReference type="Gene3D" id="3.30.428.10">
    <property type="entry name" value="HIT-like"/>
    <property type="match status" value="1"/>
</dbReference>
<dbReference type="InterPro" id="IPR011146">
    <property type="entry name" value="HIT-like"/>
</dbReference>
<dbReference type="InterPro" id="IPR036265">
    <property type="entry name" value="HIT-like_sf"/>
</dbReference>
<dbReference type="PANTHER" id="PTHR12486:SF5">
    <property type="entry name" value="ADENOSINE 5'-MONOPHOSPHORAMIDASE HINT3"/>
    <property type="match status" value="1"/>
</dbReference>
<dbReference type="PANTHER" id="PTHR12486">
    <property type="entry name" value="APRATAXIN-RELATED"/>
    <property type="match status" value="1"/>
</dbReference>
<dbReference type="Pfam" id="PF11969">
    <property type="entry name" value="DcpS_C"/>
    <property type="match status" value="1"/>
</dbReference>
<dbReference type="SUPFAM" id="SSF54197">
    <property type="entry name" value="HIT-like"/>
    <property type="match status" value="1"/>
</dbReference>
<dbReference type="PROSITE" id="PS51084">
    <property type="entry name" value="HIT_2"/>
    <property type="match status" value="1"/>
</dbReference>
<gene>
    <name type="primary">Hint3</name>
    <name type="synonym">Hint4</name>
</gene>
<sequence length="175" mass="19694">MAEKQAGLAGEPNPDCTVTAKAGPEVSSPGTSESRDYDSNCVFCRVAAGQEPETELLYCENKDLVCFKDIKPAALHHYLVVPKKHIGSCKDLNKDHIEMVESMVTVGKTILERNNFTDFTDVRMGFHVPPFCSVSHLHLHVIAPAKEFGFLSRVVYRRDSYWFITGDYLLEKLRK</sequence>
<accession>Q8K3P7</accession>
<feature type="initiator methionine" description="Removed" evidence="3">
    <location>
        <position position="1"/>
    </location>
</feature>
<feature type="chain" id="PRO_0000324329" description="Adenosine 5'-monophosphoramidase HINT3">
    <location>
        <begin position="2"/>
        <end position="175"/>
    </location>
</feature>
<feature type="domain" description="HIT" evidence="4">
    <location>
        <begin position="33"/>
        <end position="144"/>
    </location>
</feature>
<feature type="region of interest" description="Disordered" evidence="5">
    <location>
        <begin position="1"/>
        <end position="35"/>
    </location>
</feature>
<feature type="short sequence motif" description="Histidine triad motif">
    <location>
        <begin position="136"/>
        <end position="140"/>
    </location>
</feature>
<feature type="active site" description="Tele-AMP-histidine intermediate" evidence="3">
    <location>
        <position position="138"/>
    </location>
</feature>
<feature type="binding site" evidence="1">
    <location>
        <begin position="69"/>
        <end position="70"/>
    </location>
    <ligand>
        <name>AMP</name>
        <dbReference type="ChEBI" id="CHEBI:456215"/>
    </ligand>
</feature>
<feature type="binding site" evidence="1">
    <location>
        <begin position="138"/>
        <end position="140"/>
    </location>
    <ligand>
        <name>AMP</name>
        <dbReference type="ChEBI" id="CHEBI:456215"/>
    </ligand>
</feature>
<feature type="modified residue" description="N-acetylalanine" evidence="3">
    <location>
        <position position="2"/>
    </location>
</feature>
<feature type="sequence conflict" description="In Ref. 2; AAK94777." evidence="7" ref="2">
    <original>G</original>
    <variation>H</variation>
    <location>
        <position position="10"/>
    </location>
</feature>
<feature type="sequence conflict" description="In Ref. 2; AAK94777." evidence="7" ref="2">
    <original>P</original>
    <variation>A</variation>
    <location>
        <position position="12"/>
    </location>
</feature>
<feature type="sequence conflict" description="In Ref. 2; AAK94777." evidence="7" ref="2">
    <original>G</original>
    <variation>V</variation>
    <location>
        <position position="166"/>
    </location>
</feature>
<name>HINT3_RAT</name>
<organism>
    <name type="scientific">Rattus norvegicus</name>
    <name type="common">Rat</name>
    <dbReference type="NCBI Taxonomy" id="10116"/>
    <lineage>
        <taxon>Eukaryota</taxon>
        <taxon>Metazoa</taxon>
        <taxon>Chordata</taxon>
        <taxon>Craniata</taxon>
        <taxon>Vertebrata</taxon>
        <taxon>Euteleostomi</taxon>
        <taxon>Mammalia</taxon>
        <taxon>Eutheria</taxon>
        <taxon>Euarchontoglires</taxon>
        <taxon>Glires</taxon>
        <taxon>Rodentia</taxon>
        <taxon>Myomorpha</taxon>
        <taxon>Muroidea</taxon>
        <taxon>Muridae</taxon>
        <taxon>Murinae</taxon>
        <taxon>Rattus</taxon>
    </lineage>
</organism>
<evidence type="ECO:0000250" key="1">
    <source>
        <dbReference type="UniProtKB" id="P49773"/>
    </source>
</evidence>
<evidence type="ECO:0000250" key="2">
    <source>
        <dbReference type="UniProtKB" id="Q9CPS6"/>
    </source>
</evidence>
<evidence type="ECO:0000250" key="3">
    <source>
        <dbReference type="UniProtKB" id="Q9NQE9"/>
    </source>
</evidence>
<evidence type="ECO:0000255" key="4">
    <source>
        <dbReference type="PROSITE-ProRule" id="PRU00464"/>
    </source>
</evidence>
<evidence type="ECO:0000256" key="5">
    <source>
        <dbReference type="SAM" id="MobiDB-lite"/>
    </source>
</evidence>
<evidence type="ECO:0000269" key="6">
    <source>
    </source>
</evidence>
<evidence type="ECO:0000305" key="7"/>
<comment type="function">
    <text evidence="3">Exhibits adenosine 5'-monophosphoramidase activity, hydrolyzing purine nucleotide phosphoramidates with a single phosphate group such as adenosine 5'monophosphoramidate (AMP-NH2) to yield AMP and NH2 (By similarity). Hydrolyzes lysyl-AMP (AMP-N-epsilon-(N-alpha-acetyl lysine methyl ester)) generated by lysine tRNA ligase (By similarity).</text>
</comment>
<comment type="catalytic activity">
    <reaction evidence="3">
        <text>adenosine 5'-phosphoramidate + H2O = AMP + NH4(+)</text>
        <dbReference type="Rhea" id="RHEA:67916"/>
        <dbReference type="ChEBI" id="CHEBI:15377"/>
        <dbReference type="ChEBI" id="CHEBI:28938"/>
        <dbReference type="ChEBI" id="CHEBI:57890"/>
        <dbReference type="ChEBI" id="CHEBI:456215"/>
    </reaction>
</comment>
<comment type="subunit">
    <text evidence="2 3">Forms dimers to octamers and even larger oligomer (By similarity). Interacts with CALM1 (By similarity).</text>
</comment>
<comment type="subcellular location">
    <subcellularLocation>
        <location evidence="3">Cytoplasm</location>
    </subcellularLocation>
    <subcellularLocation>
        <location evidence="3">Nucleus</location>
    </subcellularLocation>
</comment>
<comment type="tissue specificity">
    <text evidence="6">Expressed in retinal ganglion cells.</text>
</comment>
<comment type="similarity">
    <text evidence="7">Belongs to the HINT family.</text>
</comment>
<protein>
    <recommendedName>
        <fullName evidence="3">Adenosine 5'-monophosphoramidase HINT3</fullName>
        <ecNumber evidence="3">3.9.1.-</ecNumber>
    </recommendedName>
    <alternativeName>
        <fullName>HINT-4</fullName>
    </alternativeName>
    <alternativeName>
        <fullName>Histidine triad nucleotide-binding protein 3</fullName>
        <shortName>HINT-3</shortName>
    </alternativeName>
</protein>